<organism>
    <name type="scientific">Shewanella sp. (strain MR-4)</name>
    <dbReference type="NCBI Taxonomy" id="60480"/>
    <lineage>
        <taxon>Bacteria</taxon>
        <taxon>Pseudomonadati</taxon>
        <taxon>Pseudomonadota</taxon>
        <taxon>Gammaproteobacteria</taxon>
        <taxon>Alteromonadales</taxon>
        <taxon>Shewanellaceae</taxon>
        <taxon>Shewanella</taxon>
    </lineage>
</organism>
<protein>
    <recommendedName>
        <fullName evidence="2">D-alanine--D-alanine ligase</fullName>
        <ecNumber evidence="2">6.3.2.4</ecNumber>
    </recommendedName>
    <alternativeName>
        <fullName evidence="2">D-Ala-D-Ala ligase</fullName>
    </alternativeName>
    <alternativeName>
        <fullName evidence="2">D-alanylalanine synthetase</fullName>
    </alternativeName>
</protein>
<name>DDL_SHESM</name>
<accession>Q0HIB5</accession>
<dbReference type="EC" id="6.3.2.4" evidence="2"/>
<dbReference type="EMBL" id="CP000446">
    <property type="protein sequence ID" value="ABI39202.1"/>
    <property type="molecule type" value="Genomic_DNA"/>
</dbReference>
<dbReference type="RefSeq" id="WP_011622892.1">
    <property type="nucleotide sequence ID" value="NC_008321.1"/>
</dbReference>
<dbReference type="SMR" id="Q0HIB5"/>
<dbReference type="KEGG" id="she:Shewmr4_2129"/>
<dbReference type="HOGENOM" id="CLU_039268_0_0_6"/>
<dbReference type="UniPathway" id="UPA00219"/>
<dbReference type="GO" id="GO:0005829">
    <property type="term" value="C:cytosol"/>
    <property type="evidence" value="ECO:0007669"/>
    <property type="project" value="TreeGrafter"/>
</dbReference>
<dbReference type="GO" id="GO:0005524">
    <property type="term" value="F:ATP binding"/>
    <property type="evidence" value="ECO:0007669"/>
    <property type="project" value="UniProtKB-KW"/>
</dbReference>
<dbReference type="GO" id="GO:0008716">
    <property type="term" value="F:D-alanine-D-alanine ligase activity"/>
    <property type="evidence" value="ECO:0007669"/>
    <property type="project" value="UniProtKB-UniRule"/>
</dbReference>
<dbReference type="GO" id="GO:0046872">
    <property type="term" value="F:metal ion binding"/>
    <property type="evidence" value="ECO:0007669"/>
    <property type="project" value="UniProtKB-KW"/>
</dbReference>
<dbReference type="GO" id="GO:0071555">
    <property type="term" value="P:cell wall organization"/>
    <property type="evidence" value="ECO:0007669"/>
    <property type="project" value="UniProtKB-KW"/>
</dbReference>
<dbReference type="GO" id="GO:0009252">
    <property type="term" value="P:peptidoglycan biosynthetic process"/>
    <property type="evidence" value="ECO:0007669"/>
    <property type="project" value="UniProtKB-UniRule"/>
</dbReference>
<dbReference type="GO" id="GO:0008360">
    <property type="term" value="P:regulation of cell shape"/>
    <property type="evidence" value="ECO:0007669"/>
    <property type="project" value="UniProtKB-KW"/>
</dbReference>
<dbReference type="FunFam" id="3.40.50.20:FF:000034">
    <property type="entry name" value="D-alanine--D-alanine ligase"/>
    <property type="match status" value="1"/>
</dbReference>
<dbReference type="Gene3D" id="3.40.50.20">
    <property type="match status" value="1"/>
</dbReference>
<dbReference type="Gene3D" id="3.30.1490.20">
    <property type="entry name" value="ATP-grasp fold, A domain"/>
    <property type="match status" value="1"/>
</dbReference>
<dbReference type="Gene3D" id="3.30.470.20">
    <property type="entry name" value="ATP-grasp fold, B domain"/>
    <property type="match status" value="1"/>
</dbReference>
<dbReference type="HAMAP" id="MF_00047">
    <property type="entry name" value="Dala_Dala_lig"/>
    <property type="match status" value="1"/>
</dbReference>
<dbReference type="InterPro" id="IPR011761">
    <property type="entry name" value="ATP-grasp"/>
</dbReference>
<dbReference type="InterPro" id="IPR013815">
    <property type="entry name" value="ATP_grasp_subdomain_1"/>
</dbReference>
<dbReference type="InterPro" id="IPR000291">
    <property type="entry name" value="D-Ala_lig_Van_CS"/>
</dbReference>
<dbReference type="InterPro" id="IPR005905">
    <property type="entry name" value="D_ala_D_ala"/>
</dbReference>
<dbReference type="InterPro" id="IPR011095">
    <property type="entry name" value="Dala_Dala_lig_C"/>
</dbReference>
<dbReference type="InterPro" id="IPR011127">
    <property type="entry name" value="Dala_Dala_lig_N"/>
</dbReference>
<dbReference type="InterPro" id="IPR016185">
    <property type="entry name" value="PreATP-grasp_dom_sf"/>
</dbReference>
<dbReference type="NCBIfam" id="TIGR01205">
    <property type="entry name" value="D_ala_D_alaTIGR"/>
    <property type="match status" value="1"/>
</dbReference>
<dbReference type="NCBIfam" id="NF002527">
    <property type="entry name" value="PRK01966.1-3"/>
    <property type="match status" value="1"/>
</dbReference>
<dbReference type="NCBIfam" id="NF002528">
    <property type="entry name" value="PRK01966.1-4"/>
    <property type="match status" value="1"/>
</dbReference>
<dbReference type="PANTHER" id="PTHR23132">
    <property type="entry name" value="D-ALANINE--D-ALANINE LIGASE"/>
    <property type="match status" value="1"/>
</dbReference>
<dbReference type="PANTHER" id="PTHR23132:SF25">
    <property type="entry name" value="D-ALANINE--D-ALANINE LIGASE A"/>
    <property type="match status" value="1"/>
</dbReference>
<dbReference type="Pfam" id="PF07478">
    <property type="entry name" value="Dala_Dala_lig_C"/>
    <property type="match status" value="1"/>
</dbReference>
<dbReference type="Pfam" id="PF01820">
    <property type="entry name" value="Dala_Dala_lig_N"/>
    <property type="match status" value="1"/>
</dbReference>
<dbReference type="PIRSF" id="PIRSF039102">
    <property type="entry name" value="Ddl/VanB"/>
    <property type="match status" value="1"/>
</dbReference>
<dbReference type="SUPFAM" id="SSF56059">
    <property type="entry name" value="Glutathione synthetase ATP-binding domain-like"/>
    <property type="match status" value="1"/>
</dbReference>
<dbReference type="SUPFAM" id="SSF52440">
    <property type="entry name" value="PreATP-grasp domain"/>
    <property type="match status" value="1"/>
</dbReference>
<dbReference type="PROSITE" id="PS50975">
    <property type="entry name" value="ATP_GRASP"/>
    <property type="match status" value="1"/>
</dbReference>
<dbReference type="PROSITE" id="PS00843">
    <property type="entry name" value="DALA_DALA_LIGASE_1"/>
    <property type="match status" value="1"/>
</dbReference>
<dbReference type="PROSITE" id="PS00844">
    <property type="entry name" value="DALA_DALA_LIGASE_2"/>
    <property type="match status" value="1"/>
</dbReference>
<proteinExistence type="inferred from homology"/>
<sequence length="336" mass="37455">MSKINLLLLCGGGSAEHDISLLSANYFETSLAKSEQFNVLRVVLDKFGQYQTAAGDDCELTNNREIRFRDETKAPWPVDYVIPCIHGYPGETGDIQSYFNLIQLPYFGCESEASSNCFNKITAKMWFSALGIPNTPYIFLNQYDDEAIAQTQAALENWGSIFVKAASQGSSVGCYKVDDSSKVAGVLKDAFGYAPYVIVEKTIKARELEVAVYEYQGEVVATLPGEIICDSNTFYTFDEKYAKSSKARTDVVAQNVPTDISEQIRAYAIKAFKGMKLRHLSRIDFFLTQDNEILLNEINTFPGSTPISMFPKMLQNHGHDFTEYLSLVINGQLAAK</sequence>
<keyword id="KW-0067">ATP-binding</keyword>
<keyword id="KW-0133">Cell shape</keyword>
<keyword id="KW-0961">Cell wall biogenesis/degradation</keyword>
<keyword id="KW-0963">Cytoplasm</keyword>
<keyword id="KW-0436">Ligase</keyword>
<keyword id="KW-0460">Magnesium</keyword>
<keyword id="KW-0464">Manganese</keyword>
<keyword id="KW-0479">Metal-binding</keyword>
<keyword id="KW-0547">Nucleotide-binding</keyword>
<keyword id="KW-0573">Peptidoglycan synthesis</keyword>
<reference key="1">
    <citation type="submission" date="2006-08" db="EMBL/GenBank/DDBJ databases">
        <title>Complete sequence of Shewanella sp. MR-4.</title>
        <authorList>
            <consortium name="US DOE Joint Genome Institute"/>
            <person name="Copeland A."/>
            <person name="Lucas S."/>
            <person name="Lapidus A."/>
            <person name="Barry K."/>
            <person name="Detter J.C."/>
            <person name="Glavina del Rio T."/>
            <person name="Hammon N."/>
            <person name="Israni S."/>
            <person name="Dalin E."/>
            <person name="Tice H."/>
            <person name="Pitluck S."/>
            <person name="Kiss H."/>
            <person name="Brettin T."/>
            <person name="Bruce D."/>
            <person name="Han C."/>
            <person name="Tapia R."/>
            <person name="Gilna P."/>
            <person name="Schmutz J."/>
            <person name="Larimer F."/>
            <person name="Land M."/>
            <person name="Hauser L."/>
            <person name="Kyrpides N."/>
            <person name="Mikhailova N."/>
            <person name="Nealson K."/>
            <person name="Konstantinidis K."/>
            <person name="Klappenbach J."/>
            <person name="Tiedje J."/>
            <person name="Richardson P."/>
        </authorList>
    </citation>
    <scope>NUCLEOTIDE SEQUENCE [LARGE SCALE GENOMIC DNA]</scope>
    <source>
        <strain>MR-4</strain>
    </source>
</reference>
<evidence type="ECO:0000250" key="1"/>
<evidence type="ECO:0000255" key="2">
    <source>
        <dbReference type="HAMAP-Rule" id="MF_00047"/>
    </source>
</evidence>
<feature type="chain" id="PRO_1000074794" description="D-alanine--D-alanine ligase">
    <location>
        <begin position="1"/>
        <end position="336"/>
    </location>
</feature>
<feature type="domain" description="ATP-grasp" evidence="2">
    <location>
        <begin position="124"/>
        <end position="330"/>
    </location>
</feature>
<feature type="binding site" evidence="2">
    <location>
        <begin position="154"/>
        <end position="209"/>
    </location>
    <ligand>
        <name>ATP</name>
        <dbReference type="ChEBI" id="CHEBI:30616"/>
    </ligand>
</feature>
<feature type="binding site" evidence="2">
    <location>
        <position position="284"/>
    </location>
    <ligand>
        <name>Mg(2+)</name>
        <dbReference type="ChEBI" id="CHEBI:18420"/>
        <label>1</label>
    </ligand>
</feature>
<feature type="binding site" evidence="2">
    <location>
        <position position="297"/>
    </location>
    <ligand>
        <name>Mg(2+)</name>
        <dbReference type="ChEBI" id="CHEBI:18420"/>
        <label>1</label>
    </ligand>
</feature>
<feature type="binding site" evidence="2">
    <location>
        <position position="297"/>
    </location>
    <ligand>
        <name>Mg(2+)</name>
        <dbReference type="ChEBI" id="CHEBI:18420"/>
        <label>2</label>
    </ligand>
</feature>
<feature type="binding site" evidence="2">
    <location>
        <position position="299"/>
    </location>
    <ligand>
        <name>Mg(2+)</name>
        <dbReference type="ChEBI" id="CHEBI:18420"/>
        <label>2</label>
    </ligand>
</feature>
<gene>
    <name evidence="2" type="primary">ddl</name>
    <name type="ordered locus">Shewmr4_2129</name>
</gene>
<comment type="function">
    <text evidence="2">Cell wall formation.</text>
</comment>
<comment type="catalytic activity">
    <reaction evidence="2">
        <text>2 D-alanine + ATP = D-alanyl-D-alanine + ADP + phosphate + H(+)</text>
        <dbReference type="Rhea" id="RHEA:11224"/>
        <dbReference type="ChEBI" id="CHEBI:15378"/>
        <dbReference type="ChEBI" id="CHEBI:30616"/>
        <dbReference type="ChEBI" id="CHEBI:43474"/>
        <dbReference type="ChEBI" id="CHEBI:57416"/>
        <dbReference type="ChEBI" id="CHEBI:57822"/>
        <dbReference type="ChEBI" id="CHEBI:456216"/>
        <dbReference type="EC" id="6.3.2.4"/>
    </reaction>
</comment>
<comment type="cofactor">
    <cofactor evidence="1">
        <name>Mg(2+)</name>
        <dbReference type="ChEBI" id="CHEBI:18420"/>
    </cofactor>
    <cofactor evidence="1">
        <name>Mn(2+)</name>
        <dbReference type="ChEBI" id="CHEBI:29035"/>
    </cofactor>
    <text evidence="1">Binds 2 magnesium or manganese ions per subunit.</text>
</comment>
<comment type="pathway">
    <text evidence="2">Cell wall biogenesis; peptidoglycan biosynthesis.</text>
</comment>
<comment type="subcellular location">
    <subcellularLocation>
        <location evidence="2">Cytoplasm</location>
    </subcellularLocation>
</comment>
<comment type="similarity">
    <text evidence="2">Belongs to the D-alanine--D-alanine ligase family.</text>
</comment>